<comment type="function">
    <text evidence="1 2">Important signaling molecule that activates signaling cascades downstream of NTRK2 (By similarity). During development, promotes the survival and differentiation of selected neuronal populations of the peripheral and central nervous systems. Participates in axonal growth, pathfinding and in the modulation of dendritic growth and morphology. Major regulator of synaptic transmission and plasticity at adult synapses in many regions of the CNS. The versatility of BDNF is emphasized by its contribution to a range of adaptive neuronal responses including long-term potentiation (LTP), long-term depression (LTD), certain forms of short-term synaptic plasticity, as well as homeostatic regulation of intrinsic neuronal excitability (By similarity).</text>
</comment>
<comment type="function">
    <molecule>Neurotrophic factor BDNF precursor form</molecule>
    <text evidence="1">Important signaling molecule that activates signaling cascades downstream of NTRK2. Activates signaling cascades via the heterodimeric receptor formed by NGFR and SORCS2. Signaling via NGFR and SORCS2 plays a role in synaptic plasticity and long-term depression (LTD). Binding to NGFR and SORCS2 promotes neuronal apoptosis. Promotes neuronal growth cone collapse.</text>
</comment>
<comment type="subunit">
    <text evidence="1 2">Monomers and homodimers (By similarity). Binds to NTRK2/TRKB. Can form heterodimers with other neurotrophin family members, such as NTF3 and NTF4 (in vitro), but the physiological relevance of this is not clear (By similarity). BDNF precursor form: interacts with the heterodimer formed by NGFR and SORCS2. Mature BDNF has much lower affinity for the heterodimer formed by NGFR and SORCS2 (By similarity).</text>
</comment>
<comment type="subcellular location">
    <subcellularLocation>
        <location evidence="2">Secreted</location>
    </subcellularLocation>
</comment>
<comment type="subcellular location">
    <molecule>Neurotrophic factor BDNF precursor form</molecule>
    <subcellularLocation>
        <location evidence="2">Secreted</location>
    </subcellularLocation>
    <text evidence="2">A proportion of BDNF is secreted as immature precursor (proBDNF).</text>
</comment>
<comment type="PTM">
    <molecule>Neurotrophic factor BDNF precursor form</molecule>
    <text evidence="2">N-glycosylated and glycosulfated, contrary to mature BDNF.</text>
</comment>
<comment type="PTM">
    <text evidence="2">Mature BDNF is produced by proteolytic removal of the propeptide, catalyzed by a FURIN family member. In addition, the precursor form is proteolytically cleaved within the propeptide, but this is not an obligatory intermediate for the production of mature BDNF. Can be converted into mature BDNF by plasmin (PLG).</text>
</comment>
<comment type="similarity">
    <text evidence="4">Belongs to the NGF-beta family.</text>
</comment>
<evidence type="ECO:0000250" key="1">
    <source>
        <dbReference type="UniProtKB" id="P21237"/>
    </source>
</evidence>
<evidence type="ECO:0000250" key="2">
    <source>
        <dbReference type="UniProtKB" id="P23560"/>
    </source>
</evidence>
<evidence type="ECO:0000255" key="3"/>
<evidence type="ECO:0000305" key="4"/>
<keyword id="KW-0165">Cleavage on pair of basic residues</keyword>
<keyword id="KW-1015">Disulfide bond</keyword>
<keyword id="KW-0325">Glycoprotein</keyword>
<keyword id="KW-0339">Growth factor</keyword>
<keyword id="KW-1185">Reference proteome</keyword>
<keyword id="KW-0964">Secreted</keyword>
<keyword id="KW-0732">Signal</keyword>
<reference key="1">
    <citation type="submission" date="2006-07" db="EMBL/GenBank/DDBJ databases">
        <title>Equus caballus brain-derived neurotrophic factor (BDNF), mRNA.</title>
        <authorList>
            <person name="Momozawa Y."/>
            <person name="Takeuchi Y."/>
            <person name="Mori Y."/>
        </authorList>
    </citation>
    <scope>NUCLEOTIDE SEQUENCE [MRNA]</scope>
</reference>
<feature type="signal peptide" evidence="3">
    <location>
        <begin position="1"/>
        <end position="18"/>
    </location>
</feature>
<feature type="chain" id="PRO_0000447532" description="Neurotrophic factor BDNF precursor form">
    <location>
        <begin position="19"/>
        <end position="247"/>
    </location>
</feature>
<feature type="propeptide" id="PRO_0000271438" evidence="1">
    <location>
        <begin position="19"/>
        <end position="128"/>
    </location>
</feature>
<feature type="chain" id="PRO_0000271439" description="Neurotrophic factor BDNF">
    <location>
        <begin position="129"/>
        <end position="247"/>
    </location>
</feature>
<feature type="site" description="Cleavage; by MBTPS1" evidence="2">
    <location>
        <begin position="57"/>
        <end position="58"/>
    </location>
</feature>
<feature type="glycosylation site" description="N-linked (GlcNAc...) asparagine" evidence="3">
    <location>
        <position position="121"/>
    </location>
</feature>
<feature type="disulfide bond" evidence="2">
    <location>
        <begin position="141"/>
        <end position="208"/>
    </location>
</feature>
<feature type="disulfide bond" evidence="2">
    <location>
        <begin position="186"/>
        <end position="237"/>
    </location>
</feature>
<feature type="disulfide bond" evidence="2">
    <location>
        <begin position="196"/>
        <end position="239"/>
    </location>
</feature>
<name>BDNF_HORSE</name>
<organism>
    <name type="scientific">Equus caballus</name>
    <name type="common">Horse</name>
    <dbReference type="NCBI Taxonomy" id="9796"/>
    <lineage>
        <taxon>Eukaryota</taxon>
        <taxon>Metazoa</taxon>
        <taxon>Chordata</taxon>
        <taxon>Craniata</taxon>
        <taxon>Vertebrata</taxon>
        <taxon>Euteleostomi</taxon>
        <taxon>Mammalia</taxon>
        <taxon>Eutheria</taxon>
        <taxon>Laurasiatheria</taxon>
        <taxon>Perissodactyla</taxon>
        <taxon>Equidae</taxon>
        <taxon>Equus</taxon>
    </lineage>
</organism>
<protein>
    <recommendedName>
        <fullName evidence="4">Neurotrophic factor BDNF precursor form</fullName>
        <shortName>proBDNF</shortName>
    </recommendedName>
    <alternativeName>
        <fullName>Brain-derived neurotrophic factor</fullName>
    </alternativeName>
    <component>
        <recommendedName>
            <fullName>Neurotrophic factor BDNF</fullName>
        </recommendedName>
    </component>
</protein>
<sequence>MTILFLTMVISYFGCMKAAPMKEANARGQGSLAYPAVRTHGTLESVNGPKAGSRGLTSLADTFEHVIEDLLDEGQKVRPDEENSKDADLYTSRVMLSSQVPLEPPLLFLLEEYKNYLDAANMSMRVRRHSDPARRGELSVCDSISEWVTAADKKTAVDMSGGTVTVLEKVPVSKGQLKQYFYETKCNPMGYTKEGCRGIDKRHWNSQCRTTQSYVRALTMDSKKRIGWRFIRIDTSCVCTLTIKRGR</sequence>
<dbReference type="EMBL" id="AB264324">
    <property type="protein sequence ID" value="BAF32951.1"/>
    <property type="molecule type" value="mRNA"/>
</dbReference>
<dbReference type="RefSeq" id="NP_001075256.1">
    <property type="nucleotide sequence ID" value="NM_001081787.1"/>
</dbReference>
<dbReference type="SMR" id="Q0EAB7"/>
<dbReference type="FunCoup" id="Q0EAB7">
    <property type="interactions" value="605"/>
</dbReference>
<dbReference type="STRING" id="9796.ENSECAP00000035766"/>
<dbReference type="GlyCosmos" id="Q0EAB7">
    <property type="glycosylation" value="1 site, No reported glycans"/>
</dbReference>
<dbReference type="PaxDb" id="9796-ENSECAP00000035766"/>
<dbReference type="Ensembl" id="ENSECAT00000083716.1">
    <property type="protein sequence ID" value="ENSECAP00000056800.1"/>
    <property type="gene ID" value="ENSECAG00000015952.4"/>
</dbReference>
<dbReference type="Ensembl" id="ENSECAT00000090754.1">
    <property type="protein sequence ID" value="ENSECAP00000073969.1"/>
    <property type="gene ID" value="ENSECAG00000015952.4"/>
</dbReference>
<dbReference type="Ensembl" id="ENSECAT00000123030.1">
    <property type="protein sequence ID" value="ENSECAP00000055665.1"/>
    <property type="gene ID" value="ENSECAG00000015952.4"/>
</dbReference>
<dbReference type="Ensembl" id="ENSECAT00000133928.1">
    <property type="protein sequence ID" value="ENSECAP00000081431.1"/>
    <property type="gene ID" value="ENSECAG00000015952.4"/>
</dbReference>
<dbReference type="Ensembl" id="ENSECAT00000140118.1">
    <property type="protein sequence ID" value="ENSECAP00000072655.1"/>
    <property type="gene ID" value="ENSECAG00000015952.4"/>
</dbReference>
<dbReference type="Ensembl" id="ENSECAT00000142409.1">
    <property type="protein sequence ID" value="ENSECAP00000083932.1"/>
    <property type="gene ID" value="ENSECAG00000015952.4"/>
</dbReference>
<dbReference type="Ensembl" id="ENSECAT00000145783.1">
    <property type="protein sequence ID" value="ENSECAP00000084073.1"/>
    <property type="gene ID" value="ENSECAG00000015952.4"/>
</dbReference>
<dbReference type="Ensembl" id="ENSECAT00000147923.1">
    <property type="protein sequence ID" value="ENSECAP00000064695.1"/>
    <property type="gene ID" value="ENSECAG00000015952.4"/>
</dbReference>
<dbReference type="GeneID" id="100009689"/>
<dbReference type="KEGG" id="ecb:100009689"/>
<dbReference type="CTD" id="627"/>
<dbReference type="VGNC" id="VGNC:55803">
    <property type="gene designation" value="BDNF"/>
</dbReference>
<dbReference type="GeneTree" id="ENSGT00390000007725"/>
<dbReference type="HOGENOM" id="CLU_059942_0_0_1"/>
<dbReference type="InParanoid" id="Q0EAB7"/>
<dbReference type="OrthoDB" id="8959386at2759"/>
<dbReference type="Proteomes" id="UP000002281">
    <property type="component" value="Chromosome 7"/>
</dbReference>
<dbReference type="GO" id="GO:0005576">
    <property type="term" value="C:extracellular region"/>
    <property type="evidence" value="ECO:0007669"/>
    <property type="project" value="UniProtKB-SubCell"/>
</dbReference>
<dbReference type="GO" id="GO:0008083">
    <property type="term" value="F:growth factor activity"/>
    <property type="evidence" value="ECO:0007669"/>
    <property type="project" value="UniProtKB-KW"/>
</dbReference>
<dbReference type="FunFam" id="2.10.90.10:FF:000002">
    <property type="entry name" value="Brain-derived neurotrophic factor"/>
    <property type="match status" value="1"/>
</dbReference>
<dbReference type="Gene3D" id="2.10.90.10">
    <property type="entry name" value="Cystine-knot cytokines"/>
    <property type="match status" value="1"/>
</dbReference>
<dbReference type="InterPro" id="IPR020430">
    <property type="entry name" value="Brain-der_neurotrophic_factor"/>
</dbReference>
<dbReference type="InterPro" id="IPR029034">
    <property type="entry name" value="Cystine-knot_cytokine"/>
</dbReference>
<dbReference type="InterPro" id="IPR020408">
    <property type="entry name" value="Nerve_growth_factor-like"/>
</dbReference>
<dbReference type="InterPro" id="IPR002072">
    <property type="entry name" value="Nerve_growth_factor-rel"/>
</dbReference>
<dbReference type="InterPro" id="IPR019846">
    <property type="entry name" value="Nerve_growth_factor_CS"/>
</dbReference>
<dbReference type="PANTHER" id="PTHR11589:SF3">
    <property type="entry name" value="BRAIN-DERIVED NEUROTROPHIC FACTOR"/>
    <property type="match status" value="1"/>
</dbReference>
<dbReference type="PANTHER" id="PTHR11589">
    <property type="entry name" value="NERVE GROWTH FACTOR NGF -RELATED"/>
    <property type="match status" value="1"/>
</dbReference>
<dbReference type="Pfam" id="PF00243">
    <property type="entry name" value="NGF"/>
    <property type="match status" value="1"/>
</dbReference>
<dbReference type="PIRSF" id="PIRSF001789">
    <property type="entry name" value="NGF"/>
    <property type="match status" value="1"/>
</dbReference>
<dbReference type="PRINTS" id="PR01912">
    <property type="entry name" value="BDNFACTOR"/>
</dbReference>
<dbReference type="PRINTS" id="PR00268">
    <property type="entry name" value="NGF"/>
</dbReference>
<dbReference type="SMART" id="SM00140">
    <property type="entry name" value="NGF"/>
    <property type="match status" value="1"/>
</dbReference>
<dbReference type="SUPFAM" id="SSF57501">
    <property type="entry name" value="Cystine-knot cytokines"/>
    <property type="match status" value="1"/>
</dbReference>
<dbReference type="PROSITE" id="PS00248">
    <property type="entry name" value="NGF_1"/>
    <property type="match status" value="1"/>
</dbReference>
<dbReference type="PROSITE" id="PS50270">
    <property type="entry name" value="NGF_2"/>
    <property type="match status" value="1"/>
</dbReference>
<accession>Q0EAB7</accession>
<proteinExistence type="evidence at transcript level"/>
<gene>
    <name type="primary">BDNF</name>
</gene>